<organismHost>
    <name type="scientific">Beta vulgaris</name>
    <name type="common">Sugar beet</name>
    <dbReference type="NCBI Taxonomy" id="161934"/>
</organismHost>
<dbReference type="EMBL" id="X53462">
    <property type="protein sequence ID" value="CAA37551.1"/>
    <property type="molecule type" value="Genomic_RNA"/>
</dbReference>
<dbReference type="EMBL" id="X73476">
    <property type="protein sequence ID" value="CAA51865.1"/>
    <property type="molecule type" value="Genomic_RNA"/>
</dbReference>
<dbReference type="PIR" id="S28712">
    <property type="entry name" value="S28712"/>
</dbReference>
<dbReference type="RefSeq" id="NP_041872.1">
    <property type="nucleotide sequence ID" value="NC_001598.1"/>
</dbReference>
<dbReference type="SMR" id="P37092"/>
<dbReference type="KEGG" id="vg:1724791"/>
<dbReference type="Proteomes" id="UP000000359">
    <property type="component" value="Segment"/>
</dbReference>
<dbReference type="GO" id="GO:0044219">
    <property type="term" value="C:host cell plasmodesma"/>
    <property type="evidence" value="ECO:0007669"/>
    <property type="project" value="UniProtKB-SubCell"/>
</dbReference>
<dbReference type="GO" id="GO:0044423">
    <property type="term" value="C:virion component"/>
    <property type="evidence" value="ECO:0007669"/>
    <property type="project" value="UniProtKB-KW"/>
</dbReference>
<dbReference type="GO" id="GO:0005524">
    <property type="term" value="F:ATP binding"/>
    <property type="evidence" value="ECO:0007669"/>
    <property type="project" value="UniProtKB-KW"/>
</dbReference>
<dbReference type="GO" id="GO:0140662">
    <property type="term" value="F:ATP-dependent protein folding chaperone"/>
    <property type="evidence" value="ECO:0007669"/>
    <property type="project" value="InterPro"/>
</dbReference>
<dbReference type="GO" id="GO:0046740">
    <property type="term" value="P:transport of virus in host, cell to cell"/>
    <property type="evidence" value="ECO:0007669"/>
    <property type="project" value="UniProtKB-KW"/>
</dbReference>
<dbReference type="Gene3D" id="3.30.420.40">
    <property type="match status" value="2"/>
</dbReference>
<dbReference type="Gene3D" id="3.90.640.10">
    <property type="entry name" value="Actin, Chain A, domain 4"/>
    <property type="match status" value="1"/>
</dbReference>
<dbReference type="InterPro" id="IPR043129">
    <property type="entry name" value="ATPase_NBD"/>
</dbReference>
<dbReference type="InterPro" id="IPR018181">
    <property type="entry name" value="Heat_shock_70_CS"/>
</dbReference>
<dbReference type="InterPro" id="IPR029047">
    <property type="entry name" value="HSP70_peptide-bd_sf"/>
</dbReference>
<dbReference type="InterPro" id="IPR013126">
    <property type="entry name" value="Hsp_70_fam"/>
</dbReference>
<dbReference type="PANTHER" id="PTHR19375">
    <property type="entry name" value="HEAT SHOCK PROTEIN 70KDA"/>
    <property type="match status" value="1"/>
</dbReference>
<dbReference type="Pfam" id="PF00012">
    <property type="entry name" value="HSP70"/>
    <property type="match status" value="1"/>
</dbReference>
<dbReference type="PRINTS" id="PR00301">
    <property type="entry name" value="HEATSHOCK70"/>
</dbReference>
<dbReference type="SUPFAM" id="SSF53067">
    <property type="entry name" value="Actin-like ATPase domain"/>
    <property type="match status" value="2"/>
</dbReference>
<dbReference type="SUPFAM" id="SSF100920">
    <property type="entry name" value="Heat shock protein 70kD (HSP70), peptide-binding domain"/>
    <property type="match status" value="1"/>
</dbReference>
<dbReference type="PROSITE" id="PS00329">
    <property type="entry name" value="HSP70_2"/>
    <property type="match status" value="1"/>
</dbReference>
<dbReference type="PROSITE" id="PS01036">
    <property type="entry name" value="HSP70_3"/>
    <property type="match status" value="1"/>
</dbReference>
<reference key="1">
    <citation type="journal article" date="1991" name="J. Gen. Virol.">
        <title>Nucleotide sequence of the 3'-terminal half of beet yellows closterovirus RNA genome: unique arrangement of eight virus genes.</title>
        <authorList>
            <person name="Agranovsky A.A."/>
            <person name="Boyko V.P."/>
            <person name="Karasev A.V."/>
            <person name="Lunina N.A."/>
            <person name="Koonin E.V."/>
            <person name="Dolja V.V."/>
        </authorList>
    </citation>
    <scope>NUCLEOTIDE SEQUENCE [GENOMIC RNA]</scope>
</reference>
<reference key="2">
    <citation type="journal article" date="1994" name="Virology">
        <title>Beet yellows closterovirus: complete genome structure and identification of a leader papain-like thiol protease.</title>
        <authorList>
            <person name="Agranovsky A.A."/>
            <person name="Koonin E.V."/>
            <person name="Boyko V.P."/>
            <person name="Maiss E."/>
            <person name="Froetschl R."/>
            <person name="Lunina N.A."/>
            <person name="Atabekov J.G."/>
        </authorList>
    </citation>
    <scope>NUCLEOTIDE SEQUENCE [GENOMIC RNA]</scope>
</reference>
<reference key="3">
    <citation type="journal article" date="1991" name="J. Mol. Biol.">
        <title>Putative 65 kDa protein of beet yellows closterovirus is a homologue of HSP70 heat shock proteins.</title>
        <authorList>
            <person name="Agranovsky A.A."/>
            <person name="Boyko V.P."/>
            <person name="Karasev A.V."/>
            <person name="Koonin E.V."/>
            <person name="Dolja V.V."/>
        </authorList>
    </citation>
    <scope>DISCUSSION OF SEQUENCE</scope>
</reference>
<reference key="4">
    <citation type="journal article" date="1999" name="Virology">
        <title>Subcellular localization of the HSP70-homolog encoded by beet yellows closterovirus.</title>
        <authorList>
            <person name="Medina V."/>
            <person name="Peremyslov V.V."/>
            <person name="Hagiwara Y."/>
            <person name="Dolja V.V."/>
        </authorList>
    </citation>
    <scope>SUBCELLULAR LOCATION</scope>
</reference>
<reference key="5">
    <citation type="journal article" date="2000" name="Virology">
        <title>Interaction between HSP70 homolog and filamentous virions of the Beet yellows virus.</title>
        <authorList>
            <person name="Napuli A.J."/>
            <person name="Falk B.W."/>
            <person name="Dolja V.V."/>
        </authorList>
    </citation>
    <scope>FUNCTION</scope>
</reference>
<reference key="6">
    <citation type="journal article" date="2001" name="EMBO J.">
        <title>Cell-to-cell movement and assembly of a plant closterovirus: roles for the capsid proteins and Hsp70 homolog.</title>
        <authorList>
            <person name="Alzhanova D.V."/>
            <person name="Napuli A.J."/>
            <person name="Creamer R."/>
            <person name="Dolja V.V."/>
        </authorList>
    </citation>
    <scope>FUNCTION</scope>
</reference>
<reference key="7">
    <citation type="journal article" date="2002" name="J. Virol.">
        <title>Interaction between long-distance transport factor and Hsp70-related movement protein of Beet yellows virus.</title>
        <authorList>
            <person name="Prokhnevsky A.I."/>
            <person name="Peremyslov V.V."/>
            <person name="Napuli A.J."/>
            <person name="Dolja V.V."/>
        </authorList>
    </citation>
    <scope>SUBUNIT</scope>
    <scope>INTERACTION WITH P20</scope>
</reference>
<reference key="8">
    <citation type="journal article" date="2007" name="Virology">
        <title>Virion tails of Beet yellows virus: coordinated assembly by three structural proteins.</title>
        <authorList>
            <person name="Alzhanova D.V."/>
            <person name="Prokhnevsky A.I."/>
            <person name="Peremyslov V.V."/>
            <person name="Dolja V.V."/>
        </authorList>
    </citation>
    <scope>FUNCTION</scope>
</reference>
<proteinExistence type="evidence at protein level"/>
<sequence length="598" mass="65231">MVVFGLDFGTTFSSVCAYVGEELYLFKQRDSAYIPTYVFLHSDTQEVAFGYDAEVLSNDLSVRGGFYRDLKRWIGCDEENYRDYLEKLKPHYKTELLKVAQSSKSTVKLDCYSGTVPQNATLPGLIATFVKALISTASEAFKCQCTGVICSVPANYNCLQRSFTESCVNLSGYPCVYMVNEPSAAALSACSRIKGATSPVLVYDFGGGTFDVSVISALNNTFVVRASGGDMNLGGRDIDKAFVEHLYNKAQLPVNYKIDISFLKESLSKKVSFLNFPVVSEQGVRVDVLVNVSELAEVAAPFVERTIKIVKEVYEKYCSSMRLEPNVKAKLLMVGGSSYLPGLLSRLSSIPFVDECLVLPDARAAVAGGCALYSACLRNDSPMLLVDCAAHNLSISSKYCESIVCVPAGSPIPFTGVRTVNMTGSNASAVYSAALFEGDFVKCRLNKRIFFGDVVLGNVGVTGSATRTVPLTLEINVSSVGTISFSLVGPTGVKKLIGGNAAYDFSSYQLGERVVADLHKHNSDKVKLIHALTYQPFQRKKLTDGDKALFLKRLTADYRREARKFSSYDDAVLNSSELLLGRIIPKILRGSRVEKLDV</sequence>
<accession>P37092</accession>
<protein>
    <recommendedName>
        <fullName>Movement protein Hsp70h</fullName>
    </recommendedName>
    <alternativeName>
        <fullName>Heat shock protein 70 homolog</fullName>
        <shortName>Hsp70h</shortName>
    </alternativeName>
</protein>
<gene>
    <name type="ORF">ORF3</name>
</gene>
<organism>
    <name type="scientific">Beet yellows virus (isolate Ukraine)</name>
    <name type="common">BYV</name>
    <name type="synonym">Sugar beet yellows virus</name>
    <dbReference type="NCBI Taxonomy" id="478555"/>
    <lineage>
        <taxon>Viruses</taxon>
        <taxon>Riboviria</taxon>
        <taxon>Orthornavirae</taxon>
        <taxon>Kitrinoviricota</taxon>
        <taxon>Alsuviricetes</taxon>
        <taxon>Martellivirales</taxon>
        <taxon>Closteroviridae</taxon>
        <taxon>Closterovirus</taxon>
        <taxon>Beet yellows virus</taxon>
    </lineage>
</organism>
<comment type="function">
    <text evidence="2 3 5">Transports viral genome to neighboring plant cells directly through plasmosdesmata, without any budding. The movement protein allows efficient cell to cell propagation, by bypassing the host cell wall barrier. Two movement proteins, p6, Hsp70h and three structural proteins, CP, CPm, and P64 are essential for cell-cell movement. Also plays a role in virion formation. Together with CPm and p64, encapsidates the 5'-terminal portion of the viral genome.</text>
</comment>
<comment type="subunit">
    <text evidence="4">Homomultimer. Interacts with p20. This interaction allows the docking of the latter to the virion.</text>
</comment>
<comment type="subcellular location">
    <subcellularLocation>
        <location evidence="1">Virion</location>
    </subcellularLocation>
    <subcellularLocation>
        <location evidence="1">Host cell junction</location>
        <location evidence="1">Host plasmodesma</location>
    </subcellularLocation>
    <text>Integral virion tail component.</text>
</comment>
<comment type="similarity">
    <text evidence="6">Belongs to the heat shock protein 70 family.</text>
</comment>
<feature type="chain" id="PRO_0000078670" description="Movement protein Hsp70h">
    <location>
        <begin position="1"/>
        <end position="598"/>
    </location>
</feature>
<evidence type="ECO:0000269" key="1">
    <source>
    </source>
</evidence>
<evidence type="ECO:0000269" key="2">
    <source>
    </source>
</evidence>
<evidence type="ECO:0000269" key="3">
    <source>
    </source>
</evidence>
<evidence type="ECO:0000269" key="4">
    <source>
    </source>
</evidence>
<evidence type="ECO:0000269" key="5">
    <source>
    </source>
</evidence>
<evidence type="ECO:0000305" key="6"/>
<keyword id="KW-0067">ATP-binding</keyword>
<keyword id="KW-0143">Chaperone</keyword>
<keyword id="KW-1031">Host cell junction</keyword>
<keyword id="KW-0547">Nucleotide-binding</keyword>
<keyword id="KW-1185">Reference proteome</keyword>
<keyword id="KW-0813">Transport</keyword>
<keyword id="KW-0916">Viral movement protein</keyword>
<keyword id="KW-0946">Virion</keyword>
<name>MVP1_BYVU</name>